<accession>A4IS03</accession>
<proteinExistence type="inferred from homology"/>
<protein>
    <recommendedName>
        <fullName evidence="1">S-ribosylhomocysteine lyase</fullName>
        <ecNumber evidence="1">4.4.1.21</ecNumber>
    </recommendedName>
    <alternativeName>
        <fullName evidence="1">AI-2 synthesis protein</fullName>
    </alternativeName>
    <alternativeName>
        <fullName evidence="1">Autoinducer-2 production protein LuxS</fullName>
    </alternativeName>
</protein>
<evidence type="ECO:0000255" key="1">
    <source>
        <dbReference type="HAMAP-Rule" id="MF_00091"/>
    </source>
</evidence>
<evidence type="ECO:0000305" key="2"/>
<organism>
    <name type="scientific">Geobacillus thermodenitrificans (strain NG80-2)</name>
    <dbReference type="NCBI Taxonomy" id="420246"/>
    <lineage>
        <taxon>Bacteria</taxon>
        <taxon>Bacillati</taxon>
        <taxon>Bacillota</taxon>
        <taxon>Bacilli</taxon>
        <taxon>Bacillales</taxon>
        <taxon>Anoxybacillaceae</taxon>
        <taxon>Geobacillus</taxon>
    </lineage>
</organism>
<name>LUXS_GEOTN</name>
<comment type="function">
    <text evidence="1">Involved in the synthesis of autoinducer 2 (AI-2) which is secreted by bacteria and is used to communicate both the cell density and the metabolic potential of the environment. The regulation of gene expression in response to changes in cell density is called quorum sensing. Catalyzes the transformation of S-ribosylhomocysteine (RHC) to homocysteine (HC) and 4,5-dihydroxy-2,3-pentadione (DPD).</text>
</comment>
<comment type="catalytic activity">
    <reaction evidence="1">
        <text>S-(5-deoxy-D-ribos-5-yl)-L-homocysteine = (S)-4,5-dihydroxypentane-2,3-dione + L-homocysteine</text>
        <dbReference type="Rhea" id="RHEA:17753"/>
        <dbReference type="ChEBI" id="CHEBI:29484"/>
        <dbReference type="ChEBI" id="CHEBI:58195"/>
        <dbReference type="ChEBI" id="CHEBI:58199"/>
        <dbReference type="EC" id="4.4.1.21"/>
    </reaction>
</comment>
<comment type="cofactor">
    <cofactor evidence="1">
        <name>Fe cation</name>
        <dbReference type="ChEBI" id="CHEBI:24875"/>
    </cofactor>
    <text evidence="1">Binds 1 Fe cation per subunit.</text>
</comment>
<comment type="subunit">
    <text evidence="1">Homodimer.</text>
</comment>
<comment type="similarity">
    <text evidence="1">Belongs to the LuxS family.</text>
</comment>
<comment type="sequence caution" evidence="2">
    <conflict type="erroneous initiation">
        <sequence resource="EMBL-CDS" id="ABO68107"/>
    </conflict>
</comment>
<keyword id="KW-0071">Autoinducer synthesis</keyword>
<keyword id="KW-0408">Iron</keyword>
<keyword id="KW-0456">Lyase</keyword>
<keyword id="KW-0479">Metal-binding</keyword>
<keyword id="KW-0673">Quorum sensing</keyword>
<feature type="chain" id="PRO_0000297998" description="S-ribosylhomocysteine lyase">
    <location>
        <begin position="1"/>
        <end position="158"/>
    </location>
</feature>
<feature type="binding site" evidence="1">
    <location>
        <position position="55"/>
    </location>
    <ligand>
        <name>Fe cation</name>
        <dbReference type="ChEBI" id="CHEBI:24875"/>
    </ligand>
</feature>
<feature type="binding site" evidence="1">
    <location>
        <position position="59"/>
    </location>
    <ligand>
        <name>Fe cation</name>
        <dbReference type="ChEBI" id="CHEBI:24875"/>
    </ligand>
</feature>
<feature type="binding site" evidence="1">
    <location>
        <position position="127"/>
    </location>
    <ligand>
        <name>Fe cation</name>
        <dbReference type="ChEBI" id="CHEBI:24875"/>
    </ligand>
</feature>
<reference key="1">
    <citation type="journal article" date="2007" name="Proc. Natl. Acad. Sci. U.S.A.">
        <title>Genome and proteome of long-chain alkane degrading Geobacillus thermodenitrificans NG80-2 isolated from a deep-subsurface oil reservoir.</title>
        <authorList>
            <person name="Feng L."/>
            <person name="Wang W."/>
            <person name="Cheng J."/>
            <person name="Ren Y."/>
            <person name="Zhao G."/>
            <person name="Gao C."/>
            <person name="Tang Y."/>
            <person name="Liu X."/>
            <person name="Han W."/>
            <person name="Peng X."/>
            <person name="Liu R."/>
            <person name="Wang L."/>
        </authorList>
    </citation>
    <scope>NUCLEOTIDE SEQUENCE [LARGE SCALE GENOMIC DNA]</scope>
    <source>
        <strain>NG80-2</strain>
    </source>
</reference>
<sequence length="158" mass="17744">MPSPVESFELDHCAVKAPYVRHCGVHKIGSDGVVNKFDIRFCQPNKEAMDPAAIHTLEHLLAYTLRKHVTKYDHFDIIDISPMGCQTGFYLVVSGSPTVDEIIDLLEETMKDALNATEVPAATERQCGQAKLHDLEAAKELMRFWLSQEKSELKKVFG</sequence>
<gene>
    <name evidence="1" type="primary">luxS</name>
    <name type="ordered locus">GTNG_2762</name>
</gene>
<dbReference type="EC" id="4.4.1.21" evidence="1"/>
<dbReference type="EMBL" id="CP000557">
    <property type="protein sequence ID" value="ABO68107.1"/>
    <property type="status" value="ALT_INIT"/>
    <property type="molecule type" value="Genomic_DNA"/>
</dbReference>
<dbReference type="RefSeq" id="WP_008880964.1">
    <property type="nucleotide sequence ID" value="NC_009328.1"/>
</dbReference>
<dbReference type="SMR" id="A4IS03"/>
<dbReference type="GeneID" id="87623095"/>
<dbReference type="KEGG" id="gtn:GTNG_2762"/>
<dbReference type="eggNOG" id="COG1854">
    <property type="taxonomic scope" value="Bacteria"/>
</dbReference>
<dbReference type="HOGENOM" id="CLU_107531_1_0_9"/>
<dbReference type="Proteomes" id="UP000001578">
    <property type="component" value="Chromosome"/>
</dbReference>
<dbReference type="GO" id="GO:0005506">
    <property type="term" value="F:iron ion binding"/>
    <property type="evidence" value="ECO:0007669"/>
    <property type="project" value="InterPro"/>
</dbReference>
<dbReference type="GO" id="GO:0043768">
    <property type="term" value="F:S-ribosylhomocysteine lyase activity"/>
    <property type="evidence" value="ECO:0007669"/>
    <property type="project" value="UniProtKB-UniRule"/>
</dbReference>
<dbReference type="GO" id="GO:0009372">
    <property type="term" value="P:quorum sensing"/>
    <property type="evidence" value="ECO:0007669"/>
    <property type="project" value="UniProtKB-UniRule"/>
</dbReference>
<dbReference type="Gene3D" id="3.30.1360.80">
    <property type="entry name" value="S-ribosylhomocysteinase (LuxS)"/>
    <property type="match status" value="1"/>
</dbReference>
<dbReference type="HAMAP" id="MF_00091">
    <property type="entry name" value="LuxS"/>
    <property type="match status" value="1"/>
</dbReference>
<dbReference type="InterPro" id="IPR037005">
    <property type="entry name" value="LuxS_sf"/>
</dbReference>
<dbReference type="InterPro" id="IPR011249">
    <property type="entry name" value="Metalloenz_LuxS/M16"/>
</dbReference>
<dbReference type="InterPro" id="IPR003815">
    <property type="entry name" value="S-ribosylhomocysteinase"/>
</dbReference>
<dbReference type="NCBIfam" id="NF002603">
    <property type="entry name" value="PRK02260.1-3"/>
    <property type="match status" value="1"/>
</dbReference>
<dbReference type="NCBIfam" id="NF002604">
    <property type="entry name" value="PRK02260.1-4"/>
    <property type="match status" value="1"/>
</dbReference>
<dbReference type="PANTHER" id="PTHR35799">
    <property type="entry name" value="S-RIBOSYLHOMOCYSTEINE LYASE"/>
    <property type="match status" value="1"/>
</dbReference>
<dbReference type="PANTHER" id="PTHR35799:SF1">
    <property type="entry name" value="S-RIBOSYLHOMOCYSTEINE LYASE"/>
    <property type="match status" value="1"/>
</dbReference>
<dbReference type="Pfam" id="PF02664">
    <property type="entry name" value="LuxS"/>
    <property type="match status" value="1"/>
</dbReference>
<dbReference type="PIRSF" id="PIRSF006160">
    <property type="entry name" value="AI2"/>
    <property type="match status" value="1"/>
</dbReference>
<dbReference type="PRINTS" id="PR01487">
    <property type="entry name" value="LUXSPROTEIN"/>
</dbReference>
<dbReference type="SUPFAM" id="SSF63411">
    <property type="entry name" value="LuxS/MPP-like metallohydrolase"/>
    <property type="match status" value="1"/>
</dbReference>